<dbReference type="EC" id="4.2.3.5" evidence="1"/>
<dbReference type="EMBL" id="CP001349">
    <property type="protein sequence ID" value="ACL56863.1"/>
    <property type="molecule type" value="Genomic_DNA"/>
</dbReference>
<dbReference type="RefSeq" id="WP_015928554.1">
    <property type="nucleotide sequence ID" value="NC_011894.1"/>
</dbReference>
<dbReference type="SMR" id="B8IS51"/>
<dbReference type="STRING" id="460265.Mnod_1873"/>
<dbReference type="KEGG" id="mno:Mnod_1873"/>
<dbReference type="eggNOG" id="COG0082">
    <property type="taxonomic scope" value="Bacteria"/>
</dbReference>
<dbReference type="HOGENOM" id="CLU_034547_0_0_5"/>
<dbReference type="OrthoDB" id="9771806at2"/>
<dbReference type="UniPathway" id="UPA00053">
    <property type="reaction ID" value="UER00090"/>
</dbReference>
<dbReference type="Proteomes" id="UP000008207">
    <property type="component" value="Chromosome"/>
</dbReference>
<dbReference type="GO" id="GO:0005829">
    <property type="term" value="C:cytosol"/>
    <property type="evidence" value="ECO:0007669"/>
    <property type="project" value="TreeGrafter"/>
</dbReference>
<dbReference type="GO" id="GO:0004107">
    <property type="term" value="F:chorismate synthase activity"/>
    <property type="evidence" value="ECO:0007669"/>
    <property type="project" value="UniProtKB-UniRule"/>
</dbReference>
<dbReference type="GO" id="GO:0010181">
    <property type="term" value="F:FMN binding"/>
    <property type="evidence" value="ECO:0007669"/>
    <property type="project" value="TreeGrafter"/>
</dbReference>
<dbReference type="GO" id="GO:0008652">
    <property type="term" value="P:amino acid biosynthetic process"/>
    <property type="evidence" value="ECO:0007669"/>
    <property type="project" value="UniProtKB-KW"/>
</dbReference>
<dbReference type="GO" id="GO:0009073">
    <property type="term" value="P:aromatic amino acid family biosynthetic process"/>
    <property type="evidence" value="ECO:0007669"/>
    <property type="project" value="UniProtKB-KW"/>
</dbReference>
<dbReference type="GO" id="GO:0009423">
    <property type="term" value="P:chorismate biosynthetic process"/>
    <property type="evidence" value="ECO:0007669"/>
    <property type="project" value="UniProtKB-UniRule"/>
</dbReference>
<dbReference type="CDD" id="cd07304">
    <property type="entry name" value="Chorismate_synthase"/>
    <property type="match status" value="1"/>
</dbReference>
<dbReference type="Gene3D" id="3.60.150.10">
    <property type="entry name" value="Chorismate synthase AroC"/>
    <property type="match status" value="1"/>
</dbReference>
<dbReference type="HAMAP" id="MF_00300">
    <property type="entry name" value="Chorismate_synth"/>
    <property type="match status" value="1"/>
</dbReference>
<dbReference type="InterPro" id="IPR000453">
    <property type="entry name" value="Chorismate_synth"/>
</dbReference>
<dbReference type="InterPro" id="IPR035904">
    <property type="entry name" value="Chorismate_synth_AroC_sf"/>
</dbReference>
<dbReference type="InterPro" id="IPR020541">
    <property type="entry name" value="Chorismate_synthase_CS"/>
</dbReference>
<dbReference type="NCBIfam" id="TIGR00033">
    <property type="entry name" value="aroC"/>
    <property type="match status" value="1"/>
</dbReference>
<dbReference type="NCBIfam" id="NF003793">
    <property type="entry name" value="PRK05382.1"/>
    <property type="match status" value="1"/>
</dbReference>
<dbReference type="PANTHER" id="PTHR21085">
    <property type="entry name" value="CHORISMATE SYNTHASE"/>
    <property type="match status" value="1"/>
</dbReference>
<dbReference type="PANTHER" id="PTHR21085:SF0">
    <property type="entry name" value="CHORISMATE SYNTHASE"/>
    <property type="match status" value="1"/>
</dbReference>
<dbReference type="Pfam" id="PF01264">
    <property type="entry name" value="Chorismate_synt"/>
    <property type="match status" value="1"/>
</dbReference>
<dbReference type="PIRSF" id="PIRSF001456">
    <property type="entry name" value="Chorismate_synth"/>
    <property type="match status" value="1"/>
</dbReference>
<dbReference type="SUPFAM" id="SSF103263">
    <property type="entry name" value="Chorismate synthase, AroC"/>
    <property type="match status" value="1"/>
</dbReference>
<dbReference type="PROSITE" id="PS00787">
    <property type="entry name" value="CHORISMATE_SYNTHASE_1"/>
    <property type="match status" value="1"/>
</dbReference>
<dbReference type="PROSITE" id="PS00788">
    <property type="entry name" value="CHORISMATE_SYNTHASE_2"/>
    <property type="match status" value="1"/>
</dbReference>
<dbReference type="PROSITE" id="PS00789">
    <property type="entry name" value="CHORISMATE_SYNTHASE_3"/>
    <property type="match status" value="1"/>
</dbReference>
<reference key="1">
    <citation type="submission" date="2009-01" db="EMBL/GenBank/DDBJ databases">
        <title>Complete sequence of chromosome of Methylobacterium nodulans ORS 2060.</title>
        <authorList>
            <consortium name="US DOE Joint Genome Institute"/>
            <person name="Lucas S."/>
            <person name="Copeland A."/>
            <person name="Lapidus A."/>
            <person name="Glavina del Rio T."/>
            <person name="Dalin E."/>
            <person name="Tice H."/>
            <person name="Bruce D."/>
            <person name="Goodwin L."/>
            <person name="Pitluck S."/>
            <person name="Sims D."/>
            <person name="Brettin T."/>
            <person name="Detter J.C."/>
            <person name="Han C."/>
            <person name="Larimer F."/>
            <person name="Land M."/>
            <person name="Hauser L."/>
            <person name="Kyrpides N."/>
            <person name="Ivanova N."/>
            <person name="Marx C.J."/>
            <person name="Richardson P."/>
        </authorList>
    </citation>
    <scope>NUCLEOTIDE SEQUENCE [LARGE SCALE GENOMIC DNA]</scope>
    <source>
        <strain>LMG 21967 / CNCM I-2342 / ORS 2060</strain>
    </source>
</reference>
<gene>
    <name evidence="1" type="primary">aroC</name>
    <name type="ordered locus">Mnod_1873</name>
</gene>
<comment type="function">
    <text evidence="1">Catalyzes the anti-1,4-elimination of the C-3 phosphate and the C-6 proR hydrogen from 5-enolpyruvylshikimate-3-phosphate (EPSP) to yield chorismate, which is the branch point compound that serves as the starting substrate for the three terminal pathways of aromatic amino acid biosynthesis. This reaction introduces a second double bond into the aromatic ring system.</text>
</comment>
<comment type="catalytic activity">
    <reaction evidence="1">
        <text>5-O-(1-carboxyvinyl)-3-phosphoshikimate = chorismate + phosphate</text>
        <dbReference type="Rhea" id="RHEA:21020"/>
        <dbReference type="ChEBI" id="CHEBI:29748"/>
        <dbReference type="ChEBI" id="CHEBI:43474"/>
        <dbReference type="ChEBI" id="CHEBI:57701"/>
        <dbReference type="EC" id="4.2.3.5"/>
    </reaction>
</comment>
<comment type="cofactor">
    <cofactor evidence="1">
        <name>FMNH2</name>
        <dbReference type="ChEBI" id="CHEBI:57618"/>
    </cofactor>
    <text evidence="1">Reduced FMN (FMNH(2)).</text>
</comment>
<comment type="pathway">
    <text evidence="1">Metabolic intermediate biosynthesis; chorismate biosynthesis; chorismate from D-erythrose 4-phosphate and phosphoenolpyruvate: step 7/7.</text>
</comment>
<comment type="subunit">
    <text evidence="1">Homotetramer.</text>
</comment>
<comment type="similarity">
    <text evidence="1">Belongs to the chorismate synthase family.</text>
</comment>
<evidence type="ECO:0000255" key="1">
    <source>
        <dbReference type="HAMAP-Rule" id="MF_00300"/>
    </source>
</evidence>
<protein>
    <recommendedName>
        <fullName evidence="1">Chorismate synthase</fullName>
        <shortName evidence="1">CS</shortName>
        <ecNumber evidence="1">4.2.3.5</ecNumber>
    </recommendedName>
    <alternativeName>
        <fullName evidence="1">5-enolpyruvylshikimate-3-phosphate phospholyase</fullName>
    </alternativeName>
</protein>
<proteinExistence type="inferred from homology"/>
<sequence length="371" mass="39530">MSHNSFGHLFRVTTFGESHGPALGCVVDGCPPLIPLEAAEIQAELDRRRPGQSRFTTQRREPDTVRILSGVFADDRTGGRQLTTGTPIALMIENVDQRSKDYSEIRDTYRPGHADYTYEAKYGIRDYRGGGRSSARETAARVAAGAIARKVLPGVTIRGALVQLGPHAIDRARFDWNEVGNNPFFCPDAVAAVQWAEILDEIRKDGSSIGAVIEVVAEGVPPGLGAPVYGKLDADLAAAMMSINAVKGVEIGDGFAAATLRGEENADEMRPGNGGAPAFLANHAGGILGGISSGQPIVCRFAVKPTSSILTPRASVTRDNRPAEVVTKGRHDPCVGIRAVPVGEAMMACVLADHYLRHRGQVGERAPFREG</sequence>
<feature type="chain" id="PRO_1000132779" description="Chorismate synthase">
    <location>
        <begin position="1"/>
        <end position="371"/>
    </location>
</feature>
<feature type="binding site" evidence="1">
    <location>
        <position position="48"/>
    </location>
    <ligand>
        <name>NADP(+)</name>
        <dbReference type="ChEBI" id="CHEBI:58349"/>
    </ligand>
</feature>
<feature type="binding site" evidence="1">
    <location>
        <position position="54"/>
    </location>
    <ligand>
        <name>NADP(+)</name>
        <dbReference type="ChEBI" id="CHEBI:58349"/>
    </ligand>
</feature>
<feature type="binding site" evidence="1">
    <location>
        <begin position="132"/>
        <end position="134"/>
    </location>
    <ligand>
        <name>FMN</name>
        <dbReference type="ChEBI" id="CHEBI:58210"/>
    </ligand>
</feature>
<feature type="binding site" evidence="1">
    <location>
        <begin position="244"/>
        <end position="245"/>
    </location>
    <ligand>
        <name>FMN</name>
        <dbReference type="ChEBI" id="CHEBI:58210"/>
    </ligand>
</feature>
<feature type="binding site" evidence="1">
    <location>
        <position position="289"/>
    </location>
    <ligand>
        <name>FMN</name>
        <dbReference type="ChEBI" id="CHEBI:58210"/>
    </ligand>
</feature>
<feature type="binding site" evidence="1">
    <location>
        <begin position="304"/>
        <end position="308"/>
    </location>
    <ligand>
        <name>FMN</name>
        <dbReference type="ChEBI" id="CHEBI:58210"/>
    </ligand>
</feature>
<feature type="binding site" evidence="1">
    <location>
        <position position="330"/>
    </location>
    <ligand>
        <name>FMN</name>
        <dbReference type="ChEBI" id="CHEBI:58210"/>
    </ligand>
</feature>
<keyword id="KW-0028">Amino-acid biosynthesis</keyword>
<keyword id="KW-0057">Aromatic amino acid biosynthesis</keyword>
<keyword id="KW-0274">FAD</keyword>
<keyword id="KW-0285">Flavoprotein</keyword>
<keyword id="KW-0288">FMN</keyword>
<keyword id="KW-0456">Lyase</keyword>
<keyword id="KW-0521">NADP</keyword>
<keyword id="KW-1185">Reference proteome</keyword>
<organism>
    <name type="scientific">Methylobacterium nodulans (strain LMG 21967 / CNCM I-2342 / ORS 2060)</name>
    <dbReference type="NCBI Taxonomy" id="460265"/>
    <lineage>
        <taxon>Bacteria</taxon>
        <taxon>Pseudomonadati</taxon>
        <taxon>Pseudomonadota</taxon>
        <taxon>Alphaproteobacteria</taxon>
        <taxon>Hyphomicrobiales</taxon>
        <taxon>Methylobacteriaceae</taxon>
        <taxon>Methylobacterium</taxon>
    </lineage>
</organism>
<name>AROC_METNO</name>
<accession>B8IS51</accession>